<dbReference type="EC" id="2.3.2.27"/>
<dbReference type="EMBL" id="AK007962">
    <property type="protein sequence ID" value="BAB25373.1"/>
    <property type="molecule type" value="mRNA"/>
</dbReference>
<dbReference type="EMBL" id="AK010006">
    <property type="protein sequence ID" value="BAB26637.1"/>
    <property type="molecule type" value="mRNA"/>
</dbReference>
<dbReference type="EMBL" id="BC089029">
    <property type="protein sequence ID" value="AAH89029.1"/>
    <property type="molecule type" value="mRNA"/>
</dbReference>
<dbReference type="CCDS" id="CCDS21228.1">
    <molecule id="Q9D6T0-1"/>
</dbReference>
<dbReference type="CCDS" id="CCDS52242.1">
    <molecule id="Q9D6T0-2"/>
</dbReference>
<dbReference type="RefSeq" id="NP_001157156.1">
    <molecule id="Q9D6T0-2"/>
    <property type="nucleotide sequence ID" value="NM_001163684.1"/>
</dbReference>
<dbReference type="RefSeq" id="NP_079809.1">
    <molecule id="Q9D6T0-1"/>
    <property type="nucleotide sequence ID" value="NM_025533.3"/>
</dbReference>
<dbReference type="RefSeq" id="XP_017167721.1">
    <molecule id="Q9D6T0-1"/>
    <property type="nucleotide sequence ID" value="XM_017312232.2"/>
</dbReference>
<dbReference type="RefSeq" id="XP_030098752.1">
    <molecule id="Q9D6T0-2"/>
    <property type="nucleotide sequence ID" value="XM_030242892.1"/>
</dbReference>
<dbReference type="SMR" id="Q9D6T0"/>
<dbReference type="BioGRID" id="211438">
    <property type="interactions" value="4"/>
</dbReference>
<dbReference type="FunCoup" id="Q9D6T0">
    <property type="interactions" value="3950"/>
</dbReference>
<dbReference type="IntAct" id="Q9D6T0">
    <property type="interactions" value="1"/>
</dbReference>
<dbReference type="STRING" id="10090.ENSMUSP00000003513"/>
<dbReference type="GlyGen" id="Q9D6T0">
    <property type="glycosylation" value="1 site, 1 N-linked glycan (1 site)"/>
</dbReference>
<dbReference type="iPTMnet" id="Q9D6T0"/>
<dbReference type="PhosphoSitePlus" id="Q9D6T0"/>
<dbReference type="SwissPalm" id="Q9D6T0"/>
<dbReference type="PaxDb" id="10090-ENSMUSP00000103461"/>
<dbReference type="PeptideAtlas" id="Q9D6T0"/>
<dbReference type="ProteomicsDB" id="293677">
    <molecule id="Q9D6T0-1"/>
</dbReference>
<dbReference type="ProteomicsDB" id="293678">
    <molecule id="Q9D6T0-2"/>
</dbReference>
<dbReference type="Pumba" id="Q9D6T0"/>
<dbReference type="Antibodypedia" id="32058">
    <property type="antibodies" value="178 antibodies from 28 providers"/>
</dbReference>
<dbReference type="DNASU" id="66394"/>
<dbReference type="Ensembl" id="ENSMUST00000003513.11">
    <molecule id="Q9D6T0-1"/>
    <property type="protein sequence ID" value="ENSMUSP00000003513.4"/>
    <property type="gene ID" value="ENSMUSG00000003421.14"/>
</dbReference>
<dbReference type="Ensembl" id="ENSMUST00000107829.9">
    <molecule id="Q9D6T0-2"/>
    <property type="protein sequence ID" value="ENSMUSP00000103460.3"/>
    <property type="gene ID" value="ENSMUSG00000003421.14"/>
</dbReference>
<dbReference type="GeneID" id="66394"/>
<dbReference type="KEGG" id="mmu:66394"/>
<dbReference type="UCSC" id="uc009gsx.2">
    <molecule id="Q9D6T0-1"/>
    <property type="organism name" value="mouse"/>
</dbReference>
<dbReference type="UCSC" id="uc009gsy.2">
    <molecule id="Q9D6T0-2"/>
    <property type="organism name" value="mouse"/>
</dbReference>
<dbReference type="AGR" id="MGI:1913644"/>
<dbReference type="CTD" id="51070"/>
<dbReference type="MGI" id="MGI:1913644">
    <property type="gene designation" value="Nosip"/>
</dbReference>
<dbReference type="VEuPathDB" id="HostDB:ENSMUSG00000003421"/>
<dbReference type="eggNOG" id="KOG3039">
    <property type="taxonomic scope" value="Eukaryota"/>
</dbReference>
<dbReference type="GeneTree" id="ENSGT00390000015505"/>
<dbReference type="HOGENOM" id="CLU_053742_0_0_1"/>
<dbReference type="InParanoid" id="Q9D6T0"/>
<dbReference type="OMA" id="PCVTKFM"/>
<dbReference type="OrthoDB" id="116827at2759"/>
<dbReference type="PhylomeDB" id="Q9D6T0"/>
<dbReference type="TreeFam" id="TF314268"/>
<dbReference type="Reactome" id="R-MMU-203754">
    <property type="pathway name" value="NOSIP mediated eNOS trafficking"/>
</dbReference>
<dbReference type="UniPathway" id="UPA00143"/>
<dbReference type="BioGRID-ORCS" id="66394">
    <property type="hits" value="9 hits in 80 CRISPR screens"/>
</dbReference>
<dbReference type="ChiTaRS" id="Nosip">
    <property type="organism name" value="mouse"/>
</dbReference>
<dbReference type="PRO" id="PR:Q9D6T0"/>
<dbReference type="Proteomes" id="UP000000589">
    <property type="component" value="Chromosome 7"/>
</dbReference>
<dbReference type="RNAct" id="Q9D6T0">
    <property type="molecule type" value="protein"/>
</dbReference>
<dbReference type="Bgee" id="ENSMUSG00000003421">
    <property type="expression patterns" value="Expressed in spermatid and 260 other cell types or tissues"/>
</dbReference>
<dbReference type="ExpressionAtlas" id="Q9D6T0">
    <property type="expression patterns" value="baseline and differential"/>
</dbReference>
<dbReference type="GO" id="GO:0005737">
    <property type="term" value="C:cytoplasm"/>
    <property type="evidence" value="ECO:0007669"/>
    <property type="project" value="UniProtKB-SubCell"/>
</dbReference>
<dbReference type="GO" id="GO:0005654">
    <property type="term" value="C:nucleoplasm"/>
    <property type="evidence" value="ECO:0007669"/>
    <property type="project" value="Ensembl"/>
</dbReference>
<dbReference type="GO" id="GO:0140313">
    <property type="term" value="F:molecular sequestering activity"/>
    <property type="evidence" value="ECO:0007669"/>
    <property type="project" value="Ensembl"/>
</dbReference>
<dbReference type="GO" id="GO:0061630">
    <property type="term" value="F:ubiquitin protein ligase activity"/>
    <property type="evidence" value="ECO:0007669"/>
    <property type="project" value="InterPro"/>
</dbReference>
<dbReference type="GO" id="GO:0016567">
    <property type="term" value="P:protein ubiquitination"/>
    <property type="evidence" value="ECO:0007669"/>
    <property type="project" value="UniProtKB-UniPathway"/>
</dbReference>
<dbReference type="GO" id="GO:0045428">
    <property type="term" value="P:regulation of nitric oxide biosynthetic process"/>
    <property type="evidence" value="ECO:0007669"/>
    <property type="project" value="Ensembl"/>
</dbReference>
<dbReference type="CDD" id="cd16661">
    <property type="entry name" value="RING-Ubox1_NOSIP"/>
    <property type="match status" value="1"/>
</dbReference>
<dbReference type="CDD" id="cd16662">
    <property type="entry name" value="RING-Ubox2_NOSIP"/>
    <property type="match status" value="1"/>
</dbReference>
<dbReference type="FunFam" id="3.30.40.10:FF:000251">
    <property type="entry name" value="Nitric oxide synthase-interacting protein"/>
    <property type="match status" value="1"/>
</dbReference>
<dbReference type="FunFam" id="3.30.40.10:FF:001144">
    <property type="entry name" value="Nitric oxide synthase-interacting protein"/>
    <property type="match status" value="1"/>
</dbReference>
<dbReference type="Gene3D" id="3.30.40.10">
    <property type="entry name" value="Zinc/RING finger domain, C3HC4 (zinc finger)"/>
    <property type="match status" value="2"/>
</dbReference>
<dbReference type="InterPro" id="IPR016818">
    <property type="entry name" value="NOSIP"/>
</dbReference>
<dbReference type="InterPro" id="IPR031790">
    <property type="entry name" value="Znf-NOSIP"/>
</dbReference>
<dbReference type="InterPro" id="IPR013083">
    <property type="entry name" value="Znf_RING/FYVE/PHD"/>
</dbReference>
<dbReference type="PANTHER" id="PTHR13063">
    <property type="entry name" value="ENOS INTERACTING PROTEIN"/>
    <property type="match status" value="1"/>
</dbReference>
<dbReference type="PANTHER" id="PTHR13063:SF10">
    <property type="entry name" value="NITRIC OXIDE SYNTHASE-INTERACTING PROTEIN"/>
    <property type="match status" value="1"/>
</dbReference>
<dbReference type="Pfam" id="PF15906">
    <property type="entry name" value="zf-NOSIP"/>
    <property type="match status" value="1"/>
</dbReference>
<dbReference type="PIRSF" id="PIRSF023577">
    <property type="entry name" value="ENOS_interacting"/>
    <property type="match status" value="1"/>
</dbReference>
<dbReference type="SUPFAM" id="SSF57850">
    <property type="entry name" value="RING/U-box"/>
    <property type="match status" value="2"/>
</dbReference>
<name>NOSIP_MOUSE</name>
<proteinExistence type="evidence at protein level"/>
<comment type="function">
    <text evidence="2 4">E3 ubiquitin-protein ligase that is essential for proper development of the forebrain, the eye and the face. Catalyzes monoubiquitination of serine/threonine-protein phosphatase 2A (PP2A) catalytic subunit PPP2CA/PPP2CB (PubMed:25546391). Negatively regulates nitric oxide production by inducing NOS1 and NOS3 translocation to actin cytoskeleton and inhibiting their enzymatic activity (By similarity).</text>
</comment>
<comment type="catalytic activity">
    <reaction>
        <text>S-ubiquitinyl-[E2 ubiquitin-conjugating enzyme]-L-cysteine + [acceptor protein]-L-lysine = [E2 ubiquitin-conjugating enzyme]-L-cysteine + N(6)-ubiquitinyl-[acceptor protein]-L-lysine.</text>
        <dbReference type="EC" id="2.3.2.27"/>
    </reaction>
</comment>
<comment type="pathway">
    <text>Protein modification; protein ubiquitination.</text>
</comment>
<comment type="subunit">
    <text evidence="2 4">Interacts with NOS1 and NOS3 (By similarity). Interacts with PP2A holoenzyme, containing PPP2CA, PPP2CB, PPP2R1A and PPP2R2A subunits (PubMed:25546391).</text>
</comment>
<comment type="subcellular location">
    <subcellularLocation>
        <location evidence="2">Cytoplasm</location>
    </subcellularLocation>
    <subcellularLocation>
        <location evidence="2">Nucleus</location>
    </subcellularLocation>
    <text evidence="2">Translocates from nucleus to cytoplasm in the G2 phase of the cell cycle.</text>
</comment>
<comment type="alternative products">
    <event type="alternative splicing"/>
    <isoform>
        <id>Q9D6T0-1</id>
        <name>1</name>
        <sequence type="displayed"/>
    </isoform>
    <isoform>
        <id>Q9D6T0-2</id>
        <name>2</name>
        <sequence type="described" ref="VSP_023795"/>
    </isoform>
</comment>
<comment type="domain">
    <text>The U-box-like region is a truncated U-box domain. It is unknown whether it is functional or not.</text>
</comment>
<comment type="disruption phenotype">
    <text evidence="4">Although mutant embryos are present at the expected Mendelian rate at 18.5 dpc, they die shortly after birth with signs of respiratory distress and cyanosis, likely due to craniofacial malformations. Malformations in knockout mice range from ocular hypotelorism, narrow snout, laterally cleft lip, and cleft secondary palate to cyclopia and presence of proboscis or a single head-like protrusion devoid of facial features. In addition, the weight of knockout embryos is significantly reduced. In knockout animals, PP2A activity is increased in palatal and facial tissues as compared to wild-type, but not in lungs, which do not seem to be affected by the mutation.</text>
</comment>
<comment type="similarity">
    <text evidence="7">Belongs to the NOSIP family.</text>
</comment>
<evidence type="ECO:0000250" key="1"/>
<evidence type="ECO:0000250" key="2">
    <source>
        <dbReference type="UniProtKB" id="Q9Y314"/>
    </source>
</evidence>
<evidence type="ECO:0000256" key="3">
    <source>
        <dbReference type="SAM" id="MobiDB-lite"/>
    </source>
</evidence>
<evidence type="ECO:0000269" key="4">
    <source>
    </source>
</evidence>
<evidence type="ECO:0000303" key="5">
    <source>
    </source>
</evidence>
<evidence type="ECO:0000303" key="6">
    <source>
    </source>
</evidence>
<evidence type="ECO:0000305" key="7"/>
<organism>
    <name type="scientific">Mus musculus</name>
    <name type="common">Mouse</name>
    <dbReference type="NCBI Taxonomy" id="10090"/>
    <lineage>
        <taxon>Eukaryota</taxon>
        <taxon>Metazoa</taxon>
        <taxon>Chordata</taxon>
        <taxon>Craniata</taxon>
        <taxon>Vertebrata</taxon>
        <taxon>Euteleostomi</taxon>
        <taxon>Mammalia</taxon>
        <taxon>Eutheria</taxon>
        <taxon>Euarchontoglires</taxon>
        <taxon>Glires</taxon>
        <taxon>Rodentia</taxon>
        <taxon>Myomorpha</taxon>
        <taxon>Muroidea</taxon>
        <taxon>Muridae</taxon>
        <taxon>Murinae</taxon>
        <taxon>Mus</taxon>
        <taxon>Mus</taxon>
    </lineage>
</organism>
<gene>
    <name type="primary">Nosip</name>
</gene>
<protein>
    <recommendedName>
        <fullName>Nitric oxide synthase-interacting protein</fullName>
    </recommendedName>
    <alternativeName>
        <fullName evidence="6">E3 ubiquitin-protein ligase NOSIP</fullName>
        <ecNumber>2.3.2.27</ecNumber>
    </alternativeName>
    <alternativeName>
        <fullName evidence="7">RING-type E3 ubiquitin transferase NOSIP</fullName>
    </alternativeName>
</protein>
<accession>Q9D6T0</accession>
<accession>Q9D8J9</accession>
<sequence>MTRHGKNCTAGAVYTYHEKKKDTAASGYGTQNIRLSRDAVKDFDCCCLSLQPCHDPVVTPDGYLYEREAILEYILHQKREIARQVKAYEKQRGARREEQKELQRAAAQDQVRGFLEKEAAIVSRPLNPFMPKAATLPNTEGEQPGPSVGPVGKDKDKALPSFWIPSLTPEAKATKLEKPSRTVTCPMSGKPLRMSDLTSVRFTQLDDSVDRVGLITRSERYVCAVTRDSLSNATPCAVLRPSGAVVTLECVEKLIRKDMVDPVNGDTLTERDIIVLQRGGTGFAGSGVKLQAEMSRPVMQA</sequence>
<reference key="1">
    <citation type="journal article" date="2005" name="Science">
        <title>The transcriptional landscape of the mammalian genome.</title>
        <authorList>
            <person name="Carninci P."/>
            <person name="Kasukawa T."/>
            <person name="Katayama S."/>
            <person name="Gough J."/>
            <person name="Frith M.C."/>
            <person name="Maeda N."/>
            <person name="Oyama R."/>
            <person name="Ravasi T."/>
            <person name="Lenhard B."/>
            <person name="Wells C."/>
            <person name="Kodzius R."/>
            <person name="Shimokawa K."/>
            <person name="Bajic V.B."/>
            <person name="Brenner S.E."/>
            <person name="Batalov S."/>
            <person name="Forrest A.R."/>
            <person name="Zavolan M."/>
            <person name="Davis M.J."/>
            <person name="Wilming L.G."/>
            <person name="Aidinis V."/>
            <person name="Allen J.E."/>
            <person name="Ambesi-Impiombato A."/>
            <person name="Apweiler R."/>
            <person name="Aturaliya R.N."/>
            <person name="Bailey T.L."/>
            <person name="Bansal M."/>
            <person name="Baxter L."/>
            <person name="Beisel K.W."/>
            <person name="Bersano T."/>
            <person name="Bono H."/>
            <person name="Chalk A.M."/>
            <person name="Chiu K.P."/>
            <person name="Choudhary V."/>
            <person name="Christoffels A."/>
            <person name="Clutterbuck D.R."/>
            <person name="Crowe M.L."/>
            <person name="Dalla E."/>
            <person name="Dalrymple B.P."/>
            <person name="de Bono B."/>
            <person name="Della Gatta G."/>
            <person name="di Bernardo D."/>
            <person name="Down T."/>
            <person name="Engstrom P."/>
            <person name="Fagiolini M."/>
            <person name="Faulkner G."/>
            <person name="Fletcher C.F."/>
            <person name="Fukushima T."/>
            <person name="Furuno M."/>
            <person name="Futaki S."/>
            <person name="Gariboldi M."/>
            <person name="Georgii-Hemming P."/>
            <person name="Gingeras T.R."/>
            <person name="Gojobori T."/>
            <person name="Green R.E."/>
            <person name="Gustincich S."/>
            <person name="Harbers M."/>
            <person name="Hayashi Y."/>
            <person name="Hensch T.K."/>
            <person name="Hirokawa N."/>
            <person name="Hill D."/>
            <person name="Huminiecki L."/>
            <person name="Iacono M."/>
            <person name="Ikeo K."/>
            <person name="Iwama A."/>
            <person name="Ishikawa T."/>
            <person name="Jakt M."/>
            <person name="Kanapin A."/>
            <person name="Katoh M."/>
            <person name="Kawasawa Y."/>
            <person name="Kelso J."/>
            <person name="Kitamura H."/>
            <person name="Kitano H."/>
            <person name="Kollias G."/>
            <person name="Krishnan S.P."/>
            <person name="Kruger A."/>
            <person name="Kummerfeld S.K."/>
            <person name="Kurochkin I.V."/>
            <person name="Lareau L.F."/>
            <person name="Lazarevic D."/>
            <person name="Lipovich L."/>
            <person name="Liu J."/>
            <person name="Liuni S."/>
            <person name="McWilliam S."/>
            <person name="Madan Babu M."/>
            <person name="Madera M."/>
            <person name="Marchionni L."/>
            <person name="Matsuda H."/>
            <person name="Matsuzawa S."/>
            <person name="Miki H."/>
            <person name="Mignone F."/>
            <person name="Miyake S."/>
            <person name="Morris K."/>
            <person name="Mottagui-Tabar S."/>
            <person name="Mulder N."/>
            <person name="Nakano N."/>
            <person name="Nakauchi H."/>
            <person name="Ng P."/>
            <person name="Nilsson R."/>
            <person name="Nishiguchi S."/>
            <person name="Nishikawa S."/>
            <person name="Nori F."/>
            <person name="Ohara O."/>
            <person name="Okazaki Y."/>
            <person name="Orlando V."/>
            <person name="Pang K.C."/>
            <person name="Pavan W.J."/>
            <person name="Pavesi G."/>
            <person name="Pesole G."/>
            <person name="Petrovsky N."/>
            <person name="Piazza S."/>
            <person name="Reed J."/>
            <person name="Reid J.F."/>
            <person name="Ring B.Z."/>
            <person name="Ringwald M."/>
            <person name="Rost B."/>
            <person name="Ruan Y."/>
            <person name="Salzberg S.L."/>
            <person name="Sandelin A."/>
            <person name="Schneider C."/>
            <person name="Schoenbach C."/>
            <person name="Sekiguchi K."/>
            <person name="Semple C.A."/>
            <person name="Seno S."/>
            <person name="Sessa L."/>
            <person name="Sheng Y."/>
            <person name="Shibata Y."/>
            <person name="Shimada H."/>
            <person name="Shimada K."/>
            <person name="Silva D."/>
            <person name="Sinclair B."/>
            <person name="Sperling S."/>
            <person name="Stupka E."/>
            <person name="Sugiura K."/>
            <person name="Sultana R."/>
            <person name="Takenaka Y."/>
            <person name="Taki K."/>
            <person name="Tammoja K."/>
            <person name="Tan S.L."/>
            <person name="Tang S."/>
            <person name="Taylor M.S."/>
            <person name="Tegner J."/>
            <person name="Teichmann S.A."/>
            <person name="Ueda H.R."/>
            <person name="van Nimwegen E."/>
            <person name="Verardo R."/>
            <person name="Wei C.L."/>
            <person name="Yagi K."/>
            <person name="Yamanishi H."/>
            <person name="Zabarovsky E."/>
            <person name="Zhu S."/>
            <person name="Zimmer A."/>
            <person name="Hide W."/>
            <person name="Bult C."/>
            <person name="Grimmond S.M."/>
            <person name="Teasdale R.D."/>
            <person name="Liu E.T."/>
            <person name="Brusic V."/>
            <person name="Quackenbush J."/>
            <person name="Wahlestedt C."/>
            <person name="Mattick J.S."/>
            <person name="Hume D.A."/>
            <person name="Kai C."/>
            <person name="Sasaki D."/>
            <person name="Tomaru Y."/>
            <person name="Fukuda S."/>
            <person name="Kanamori-Katayama M."/>
            <person name="Suzuki M."/>
            <person name="Aoki J."/>
            <person name="Arakawa T."/>
            <person name="Iida J."/>
            <person name="Imamura K."/>
            <person name="Itoh M."/>
            <person name="Kato T."/>
            <person name="Kawaji H."/>
            <person name="Kawagashira N."/>
            <person name="Kawashima T."/>
            <person name="Kojima M."/>
            <person name="Kondo S."/>
            <person name="Konno H."/>
            <person name="Nakano K."/>
            <person name="Ninomiya N."/>
            <person name="Nishio T."/>
            <person name="Okada M."/>
            <person name="Plessy C."/>
            <person name="Shibata K."/>
            <person name="Shiraki T."/>
            <person name="Suzuki S."/>
            <person name="Tagami M."/>
            <person name="Waki K."/>
            <person name="Watahiki A."/>
            <person name="Okamura-Oho Y."/>
            <person name="Suzuki H."/>
            <person name="Kawai J."/>
            <person name="Hayashizaki Y."/>
        </authorList>
    </citation>
    <scope>NUCLEOTIDE SEQUENCE [LARGE SCALE MRNA] (ISOFORMS 1 AND 2)</scope>
    <source>
        <strain>C57BL/6J</strain>
        <tissue>Pancreas</tissue>
        <tissue>Tongue</tissue>
    </source>
</reference>
<reference key="2">
    <citation type="journal article" date="2004" name="Genome Res.">
        <title>The status, quality, and expansion of the NIH full-length cDNA project: the Mammalian Gene Collection (MGC).</title>
        <authorList>
            <consortium name="The MGC Project Team"/>
        </authorList>
    </citation>
    <scope>NUCLEOTIDE SEQUENCE [LARGE SCALE MRNA] (ISOFORM 1)</scope>
    <source>
        <strain>C57BL/6J</strain>
        <tissue>Brain</tissue>
    </source>
</reference>
<reference key="3">
    <citation type="journal article" date="2010" name="Cell">
        <title>A tissue-specific atlas of mouse protein phosphorylation and expression.</title>
        <authorList>
            <person name="Huttlin E.L."/>
            <person name="Jedrychowski M.P."/>
            <person name="Elias J.E."/>
            <person name="Goswami T."/>
            <person name="Rad R."/>
            <person name="Beausoleil S.A."/>
            <person name="Villen J."/>
            <person name="Haas W."/>
            <person name="Sowa M.E."/>
            <person name="Gygi S.P."/>
        </authorList>
    </citation>
    <scope>IDENTIFICATION BY MASS SPECTROMETRY [LARGE SCALE ANALYSIS]</scope>
    <source>
        <tissue>Kidney</tissue>
        <tissue>Liver</tissue>
        <tissue>Lung</tissue>
        <tissue>Pancreas</tissue>
        <tissue>Spleen</tissue>
        <tissue>Testis</tissue>
    </source>
</reference>
<reference key="4">
    <citation type="journal article" date="2014" name="PLoS ONE">
        <title>The ubiquitin E3 ligase NOSIP modulates protein phosphatase 2A activity in craniofacial development.</title>
        <authorList>
            <person name="Hoffmeister M."/>
            <person name="Prelle C."/>
            <person name="Kuechler P."/>
            <person name="Kovacevic I."/>
            <person name="Moser M."/>
            <person name="Mueller-Esterl W."/>
            <person name="Oess S."/>
        </authorList>
    </citation>
    <scope>FUNCTION</scope>
    <scope>DISRUPTION PHENOTYPE</scope>
    <scope>INTERACTION WITH PP2A HOLOENZYME</scope>
</reference>
<keyword id="KW-0025">Alternative splicing</keyword>
<keyword id="KW-0963">Cytoplasm</keyword>
<keyword id="KW-0217">Developmental protein</keyword>
<keyword id="KW-0539">Nucleus</keyword>
<keyword id="KW-0597">Phosphoprotein</keyword>
<keyword id="KW-1185">Reference proteome</keyword>
<keyword id="KW-0808">Transferase</keyword>
<keyword id="KW-0833">Ubl conjugation pathway</keyword>
<feature type="chain" id="PRO_0000280587" description="Nitric oxide synthase-interacting protein">
    <location>
        <begin position="1"/>
        <end position="301"/>
    </location>
</feature>
<feature type="region of interest" description="U-box-like">
    <location>
        <begin position="55"/>
        <end position="75"/>
    </location>
</feature>
<feature type="region of interest" description="Disordered" evidence="3">
    <location>
        <begin position="131"/>
        <end position="154"/>
    </location>
</feature>
<feature type="short sequence motif" description="Nuclear localization signal" evidence="1">
    <location>
        <begin position="78"/>
        <end position="101"/>
    </location>
</feature>
<feature type="modified residue" description="Phosphoserine" evidence="2">
    <location>
        <position position="36"/>
    </location>
</feature>
<feature type="splice variant" id="VSP_023795" description="In isoform 2." evidence="5">
    <location>
        <begin position="180"/>
        <end position="204"/>
    </location>
</feature>